<accession>Q32EE9</accession>
<reference key="1">
    <citation type="journal article" date="2005" name="Nucleic Acids Res.">
        <title>Genome dynamics and diversity of Shigella species, the etiologic agents of bacillary dysentery.</title>
        <authorList>
            <person name="Yang F."/>
            <person name="Yang J."/>
            <person name="Zhang X."/>
            <person name="Chen L."/>
            <person name="Jiang Y."/>
            <person name="Yan Y."/>
            <person name="Tang X."/>
            <person name="Wang J."/>
            <person name="Xiong Z."/>
            <person name="Dong J."/>
            <person name="Xue Y."/>
            <person name="Zhu Y."/>
            <person name="Xu X."/>
            <person name="Sun L."/>
            <person name="Chen S."/>
            <person name="Nie H."/>
            <person name="Peng J."/>
            <person name="Xu J."/>
            <person name="Wang Y."/>
            <person name="Yuan Z."/>
            <person name="Wen Y."/>
            <person name="Yao Z."/>
            <person name="Shen Y."/>
            <person name="Qiang B."/>
            <person name="Hou Y."/>
            <person name="Yu J."/>
            <person name="Jin Q."/>
        </authorList>
    </citation>
    <scope>NUCLEOTIDE SEQUENCE [LARGE SCALE GENOMIC DNA]</scope>
    <source>
        <strain>Sd197</strain>
    </source>
</reference>
<sequence>MSFNTIIDWNSCTAEQQRQLLMRPAISTSESITRTVNDILDNVKARGDEALREYSAKFDKTTVTALTVSAEEIAAASERLSDELKQAMAVAVKNIETFHTAQKLPPVDVETQPGVRCQQVTRPVASVGLYIPGGSAPLFSTVLMLATPARIAGCKKVVLCSPPPIADEILYAAQLCGVQDVFNVGGAQAIAALAFGTESVPKVDKIFGPGNAFVTEAKRQVSQRLDGAAIDMPAGPSEVLVIADSGATPDFVASDLLSQAEHGPDSQVILLTPAADMARRVAEAVERQLAELPRAETARQALSASRLIVTKDLAQCVEISNQYGPEHLIIQTRNARVLVDGITSAGSVFLGDWSPESAGDYASGTNHVLPTYGYTATCSSLGLADFQKRMTVQELSKEGFSALASTIETLAAAERLTAHKNAVTLRVNALKEQA</sequence>
<proteinExistence type="inferred from homology"/>
<gene>
    <name evidence="1" type="primary">hisD</name>
    <name type="ordered locus">SDY_2221</name>
</gene>
<comment type="function">
    <text evidence="1">Catalyzes the sequential NAD-dependent oxidations of L-histidinol to L-histidinaldehyde and then to L-histidine.</text>
</comment>
<comment type="catalytic activity">
    <reaction evidence="1">
        <text>L-histidinol + 2 NAD(+) + H2O = L-histidine + 2 NADH + 3 H(+)</text>
        <dbReference type="Rhea" id="RHEA:20641"/>
        <dbReference type="ChEBI" id="CHEBI:15377"/>
        <dbReference type="ChEBI" id="CHEBI:15378"/>
        <dbReference type="ChEBI" id="CHEBI:57540"/>
        <dbReference type="ChEBI" id="CHEBI:57595"/>
        <dbReference type="ChEBI" id="CHEBI:57699"/>
        <dbReference type="ChEBI" id="CHEBI:57945"/>
        <dbReference type="EC" id="1.1.1.23"/>
    </reaction>
</comment>
<comment type="cofactor">
    <cofactor evidence="1">
        <name>Zn(2+)</name>
        <dbReference type="ChEBI" id="CHEBI:29105"/>
    </cofactor>
    <text evidence="1">Binds 1 zinc ion per subunit.</text>
</comment>
<comment type="pathway">
    <text evidence="1">Amino-acid biosynthesis; L-histidine biosynthesis; L-histidine from 5-phospho-alpha-D-ribose 1-diphosphate: step 9/9.</text>
</comment>
<comment type="subunit">
    <text evidence="1">Homodimer.</text>
</comment>
<comment type="similarity">
    <text evidence="1">Belongs to the histidinol dehydrogenase family.</text>
</comment>
<feature type="chain" id="PRO_0000135843" description="Histidinol dehydrogenase">
    <location>
        <begin position="1"/>
        <end position="434"/>
    </location>
</feature>
<feature type="active site" description="Proton acceptor" evidence="1">
    <location>
        <position position="326"/>
    </location>
</feature>
<feature type="active site" description="Proton acceptor" evidence="1">
    <location>
        <position position="327"/>
    </location>
</feature>
<feature type="binding site" evidence="1">
    <location>
        <position position="130"/>
    </location>
    <ligand>
        <name>NAD(+)</name>
        <dbReference type="ChEBI" id="CHEBI:57540"/>
    </ligand>
</feature>
<feature type="binding site" evidence="1">
    <location>
        <position position="188"/>
    </location>
    <ligand>
        <name>NAD(+)</name>
        <dbReference type="ChEBI" id="CHEBI:57540"/>
    </ligand>
</feature>
<feature type="binding site" evidence="1">
    <location>
        <position position="211"/>
    </location>
    <ligand>
        <name>NAD(+)</name>
        <dbReference type="ChEBI" id="CHEBI:57540"/>
    </ligand>
</feature>
<feature type="binding site" evidence="1">
    <location>
        <position position="237"/>
    </location>
    <ligand>
        <name>substrate</name>
    </ligand>
</feature>
<feature type="binding site" evidence="1">
    <location>
        <position position="259"/>
    </location>
    <ligand>
        <name>substrate</name>
    </ligand>
</feature>
<feature type="binding site" evidence="1">
    <location>
        <position position="259"/>
    </location>
    <ligand>
        <name>Zn(2+)</name>
        <dbReference type="ChEBI" id="CHEBI:29105"/>
    </ligand>
</feature>
<feature type="binding site" evidence="1">
    <location>
        <position position="262"/>
    </location>
    <ligand>
        <name>substrate</name>
    </ligand>
</feature>
<feature type="binding site" evidence="1">
    <location>
        <position position="262"/>
    </location>
    <ligand>
        <name>Zn(2+)</name>
        <dbReference type="ChEBI" id="CHEBI:29105"/>
    </ligand>
</feature>
<feature type="binding site" evidence="1">
    <location>
        <position position="327"/>
    </location>
    <ligand>
        <name>substrate</name>
    </ligand>
</feature>
<feature type="binding site" evidence="1">
    <location>
        <position position="360"/>
    </location>
    <ligand>
        <name>substrate</name>
    </ligand>
</feature>
<feature type="binding site" evidence="1">
    <location>
        <position position="360"/>
    </location>
    <ligand>
        <name>Zn(2+)</name>
        <dbReference type="ChEBI" id="CHEBI:29105"/>
    </ligand>
</feature>
<feature type="binding site" evidence="1">
    <location>
        <position position="414"/>
    </location>
    <ligand>
        <name>substrate</name>
    </ligand>
</feature>
<feature type="binding site" evidence="1">
    <location>
        <position position="419"/>
    </location>
    <ligand>
        <name>substrate</name>
    </ligand>
</feature>
<feature type="binding site" evidence="1">
    <location>
        <position position="419"/>
    </location>
    <ligand>
        <name>Zn(2+)</name>
        <dbReference type="ChEBI" id="CHEBI:29105"/>
    </ligand>
</feature>
<dbReference type="EC" id="1.1.1.23" evidence="1"/>
<dbReference type="EMBL" id="CP000034">
    <property type="protein sequence ID" value="ABB62306.1"/>
    <property type="molecule type" value="Genomic_DNA"/>
</dbReference>
<dbReference type="RefSeq" id="WP_005021699.1">
    <property type="nucleotide sequence ID" value="NC_007606.1"/>
</dbReference>
<dbReference type="RefSeq" id="YP_403797.1">
    <property type="nucleotide sequence ID" value="NC_007606.1"/>
</dbReference>
<dbReference type="SMR" id="Q32EE9"/>
<dbReference type="STRING" id="300267.SDY_2221"/>
<dbReference type="EnsemblBacteria" id="ABB62306">
    <property type="protein sequence ID" value="ABB62306"/>
    <property type="gene ID" value="SDY_2221"/>
</dbReference>
<dbReference type="KEGG" id="sdy:SDY_2221"/>
<dbReference type="PATRIC" id="fig|300267.13.peg.2685"/>
<dbReference type="HOGENOM" id="CLU_006732_3_0_6"/>
<dbReference type="UniPathway" id="UPA00031">
    <property type="reaction ID" value="UER00014"/>
</dbReference>
<dbReference type="Proteomes" id="UP000002716">
    <property type="component" value="Chromosome"/>
</dbReference>
<dbReference type="GO" id="GO:0005829">
    <property type="term" value="C:cytosol"/>
    <property type="evidence" value="ECO:0007669"/>
    <property type="project" value="TreeGrafter"/>
</dbReference>
<dbReference type="GO" id="GO:0004399">
    <property type="term" value="F:histidinol dehydrogenase activity"/>
    <property type="evidence" value="ECO:0007669"/>
    <property type="project" value="UniProtKB-UniRule"/>
</dbReference>
<dbReference type="GO" id="GO:0051287">
    <property type="term" value="F:NAD binding"/>
    <property type="evidence" value="ECO:0007669"/>
    <property type="project" value="InterPro"/>
</dbReference>
<dbReference type="GO" id="GO:0008270">
    <property type="term" value="F:zinc ion binding"/>
    <property type="evidence" value="ECO:0007669"/>
    <property type="project" value="UniProtKB-UniRule"/>
</dbReference>
<dbReference type="GO" id="GO:0000105">
    <property type="term" value="P:L-histidine biosynthetic process"/>
    <property type="evidence" value="ECO:0007669"/>
    <property type="project" value="UniProtKB-UniRule"/>
</dbReference>
<dbReference type="CDD" id="cd06572">
    <property type="entry name" value="Histidinol_dh"/>
    <property type="match status" value="1"/>
</dbReference>
<dbReference type="FunFam" id="1.20.5.1300:FF:000001">
    <property type="entry name" value="Histidine biosynthesis trifunctional protein"/>
    <property type="match status" value="1"/>
</dbReference>
<dbReference type="FunFam" id="3.40.50.1980:FF:000001">
    <property type="entry name" value="Histidinol dehydrogenase"/>
    <property type="match status" value="1"/>
</dbReference>
<dbReference type="Gene3D" id="1.20.5.1300">
    <property type="match status" value="1"/>
</dbReference>
<dbReference type="Gene3D" id="3.40.50.1980">
    <property type="entry name" value="Nitrogenase molybdenum iron protein domain"/>
    <property type="match status" value="2"/>
</dbReference>
<dbReference type="HAMAP" id="MF_01024">
    <property type="entry name" value="HisD"/>
    <property type="match status" value="1"/>
</dbReference>
<dbReference type="InterPro" id="IPR016161">
    <property type="entry name" value="Ald_DH/histidinol_DH"/>
</dbReference>
<dbReference type="InterPro" id="IPR001692">
    <property type="entry name" value="Histidinol_DH_CS"/>
</dbReference>
<dbReference type="InterPro" id="IPR022695">
    <property type="entry name" value="Histidinol_DH_monofunct"/>
</dbReference>
<dbReference type="InterPro" id="IPR012131">
    <property type="entry name" value="Hstdl_DH"/>
</dbReference>
<dbReference type="NCBIfam" id="TIGR00069">
    <property type="entry name" value="hisD"/>
    <property type="match status" value="1"/>
</dbReference>
<dbReference type="PANTHER" id="PTHR21256:SF2">
    <property type="entry name" value="HISTIDINE BIOSYNTHESIS TRIFUNCTIONAL PROTEIN"/>
    <property type="match status" value="1"/>
</dbReference>
<dbReference type="PANTHER" id="PTHR21256">
    <property type="entry name" value="HISTIDINOL DEHYDROGENASE HDH"/>
    <property type="match status" value="1"/>
</dbReference>
<dbReference type="Pfam" id="PF00815">
    <property type="entry name" value="Histidinol_dh"/>
    <property type="match status" value="1"/>
</dbReference>
<dbReference type="PIRSF" id="PIRSF000099">
    <property type="entry name" value="Histidinol_dh"/>
    <property type="match status" value="1"/>
</dbReference>
<dbReference type="PRINTS" id="PR00083">
    <property type="entry name" value="HOLDHDRGNASE"/>
</dbReference>
<dbReference type="SUPFAM" id="SSF53720">
    <property type="entry name" value="ALDH-like"/>
    <property type="match status" value="1"/>
</dbReference>
<dbReference type="PROSITE" id="PS00611">
    <property type="entry name" value="HISOL_DEHYDROGENASE"/>
    <property type="match status" value="1"/>
</dbReference>
<organism>
    <name type="scientific">Shigella dysenteriae serotype 1 (strain Sd197)</name>
    <dbReference type="NCBI Taxonomy" id="300267"/>
    <lineage>
        <taxon>Bacteria</taxon>
        <taxon>Pseudomonadati</taxon>
        <taxon>Pseudomonadota</taxon>
        <taxon>Gammaproteobacteria</taxon>
        <taxon>Enterobacterales</taxon>
        <taxon>Enterobacteriaceae</taxon>
        <taxon>Shigella</taxon>
    </lineage>
</organism>
<evidence type="ECO:0000255" key="1">
    <source>
        <dbReference type="HAMAP-Rule" id="MF_01024"/>
    </source>
</evidence>
<keyword id="KW-0028">Amino-acid biosynthesis</keyword>
<keyword id="KW-0368">Histidine biosynthesis</keyword>
<keyword id="KW-0479">Metal-binding</keyword>
<keyword id="KW-0520">NAD</keyword>
<keyword id="KW-0560">Oxidoreductase</keyword>
<keyword id="KW-1185">Reference proteome</keyword>
<keyword id="KW-0862">Zinc</keyword>
<protein>
    <recommendedName>
        <fullName evidence="1">Histidinol dehydrogenase</fullName>
        <shortName evidence="1">HDH</shortName>
        <ecNumber evidence="1">1.1.1.23</ecNumber>
    </recommendedName>
</protein>
<name>HISX_SHIDS</name>